<comment type="function">
    <text evidence="1">Transfers the 4'-phosphopantetheine moiety from coenzyme A to a Ser of acyl-carrier-protein.</text>
</comment>
<comment type="catalytic activity">
    <reaction evidence="1">
        <text>apo-[ACP] + CoA = holo-[ACP] + adenosine 3',5'-bisphosphate + H(+)</text>
        <dbReference type="Rhea" id="RHEA:12068"/>
        <dbReference type="Rhea" id="RHEA-COMP:9685"/>
        <dbReference type="Rhea" id="RHEA-COMP:9690"/>
        <dbReference type="ChEBI" id="CHEBI:15378"/>
        <dbReference type="ChEBI" id="CHEBI:29999"/>
        <dbReference type="ChEBI" id="CHEBI:57287"/>
        <dbReference type="ChEBI" id="CHEBI:58343"/>
        <dbReference type="ChEBI" id="CHEBI:64479"/>
        <dbReference type="EC" id="2.7.8.7"/>
    </reaction>
</comment>
<comment type="cofactor">
    <cofactor evidence="1">
        <name>Mg(2+)</name>
        <dbReference type="ChEBI" id="CHEBI:18420"/>
    </cofactor>
</comment>
<comment type="subcellular location">
    <subcellularLocation>
        <location evidence="1">Cytoplasm</location>
    </subcellularLocation>
</comment>
<comment type="similarity">
    <text evidence="1">Belongs to the P-Pant transferase superfamily. AcpS family.</text>
</comment>
<dbReference type="EC" id="2.7.8.7" evidence="1"/>
<dbReference type="EMBL" id="CP000943">
    <property type="protein sequence ID" value="ACA20870.1"/>
    <property type="molecule type" value="Genomic_DNA"/>
</dbReference>
<dbReference type="RefSeq" id="WP_012336246.1">
    <property type="nucleotide sequence ID" value="NC_010511.1"/>
</dbReference>
<dbReference type="SMR" id="B0UE20"/>
<dbReference type="STRING" id="426117.M446_6616"/>
<dbReference type="KEGG" id="met:M446_6616"/>
<dbReference type="eggNOG" id="COG0736">
    <property type="taxonomic scope" value="Bacteria"/>
</dbReference>
<dbReference type="HOGENOM" id="CLU_089696_0_2_5"/>
<dbReference type="GO" id="GO:0005737">
    <property type="term" value="C:cytoplasm"/>
    <property type="evidence" value="ECO:0007669"/>
    <property type="project" value="UniProtKB-SubCell"/>
</dbReference>
<dbReference type="GO" id="GO:0008897">
    <property type="term" value="F:holo-[acyl-carrier-protein] synthase activity"/>
    <property type="evidence" value="ECO:0007669"/>
    <property type="project" value="UniProtKB-UniRule"/>
</dbReference>
<dbReference type="GO" id="GO:0000287">
    <property type="term" value="F:magnesium ion binding"/>
    <property type="evidence" value="ECO:0007669"/>
    <property type="project" value="UniProtKB-UniRule"/>
</dbReference>
<dbReference type="GO" id="GO:0006633">
    <property type="term" value="P:fatty acid biosynthetic process"/>
    <property type="evidence" value="ECO:0007669"/>
    <property type="project" value="UniProtKB-UniRule"/>
</dbReference>
<dbReference type="Gene3D" id="3.90.470.20">
    <property type="entry name" value="4'-phosphopantetheinyl transferase domain"/>
    <property type="match status" value="1"/>
</dbReference>
<dbReference type="HAMAP" id="MF_00101">
    <property type="entry name" value="AcpS"/>
    <property type="match status" value="1"/>
</dbReference>
<dbReference type="InterPro" id="IPR008278">
    <property type="entry name" value="4-PPantetheinyl_Trfase_dom"/>
</dbReference>
<dbReference type="InterPro" id="IPR037143">
    <property type="entry name" value="4-PPantetheinyl_Trfase_dom_sf"/>
</dbReference>
<dbReference type="InterPro" id="IPR002582">
    <property type="entry name" value="ACPS"/>
</dbReference>
<dbReference type="InterPro" id="IPR004568">
    <property type="entry name" value="Ppantetheine-prot_Trfase_dom"/>
</dbReference>
<dbReference type="NCBIfam" id="TIGR00516">
    <property type="entry name" value="acpS"/>
    <property type="match status" value="1"/>
</dbReference>
<dbReference type="NCBIfam" id="TIGR00556">
    <property type="entry name" value="pantethn_trn"/>
    <property type="match status" value="1"/>
</dbReference>
<dbReference type="Pfam" id="PF01648">
    <property type="entry name" value="ACPS"/>
    <property type="match status" value="1"/>
</dbReference>
<dbReference type="SUPFAM" id="SSF56214">
    <property type="entry name" value="4'-phosphopantetheinyl transferase"/>
    <property type="match status" value="1"/>
</dbReference>
<organism>
    <name type="scientific">Methylobacterium sp. (strain 4-46)</name>
    <dbReference type="NCBI Taxonomy" id="426117"/>
    <lineage>
        <taxon>Bacteria</taxon>
        <taxon>Pseudomonadati</taxon>
        <taxon>Pseudomonadota</taxon>
        <taxon>Alphaproteobacteria</taxon>
        <taxon>Hyphomicrobiales</taxon>
        <taxon>Methylobacteriaceae</taxon>
        <taxon>Methylobacterium</taxon>
    </lineage>
</organism>
<accession>B0UE20</accession>
<protein>
    <recommendedName>
        <fullName evidence="1">Holo-[acyl-carrier-protein] synthase</fullName>
        <shortName evidence="1">Holo-ACP synthase</shortName>
        <ecNumber evidence="1">2.7.8.7</ecNumber>
    </recommendedName>
    <alternativeName>
        <fullName evidence="1">4'-phosphopantetheinyl transferase AcpS</fullName>
    </alternativeName>
</protein>
<keyword id="KW-0963">Cytoplasm</keyword>
<keyword id="KW-0275">Fatty acid biosynthesis</keyword>
<keyword id="KW-0276">Fatty acid metabolism</keyword>
<keyword id="KW-0444">Lipid biosynthesis</keyword>
<keyword id="KW-0443">Lipid metabolism</keyword>
<keyword id="KW-0460">Magnesium</keyword>
<keyword id="KW-0479">Metal-binding</keyword>
<keyword id="KW-0808">Transferase</keyword>
<gene>
    <name evidence="1" type="primary">acpS</name>
    <name type="ordered locus">M446_6616</name>
</gene>
<evidence type="ECO:0000255" key="1">
    <source>
        <dbReference type="HAMAP-Rule" id="MF_00101"/>
    </source>
</evidence>
<reference key="1">
    <citation type="submission" date="2008-02" db="EMBL/GenBank/DDBJ databases">
        <title>Complete sequence of chromosome of Methylobacterium sp. 4-46.</title>
        <authorList>
            <consortium name="US DOE Joint Genome Institute"/>
            <person name="Copeland A."/>
            <person name="Lucas S."/>
            <person name="Lapidus A."/>
            <person name="Glavina del Rio T."/>
            <person name="Dalin E."/>
            <person name="Tice H."/>
            <person name="Bruce D."/>
            <person name="Goodwin L."/>
            <person name="Pitluck S."/>
            <person name="Chertkov O."/>
            <person name="Brettin T."/>
            <person name="Detter J.C."/>
            <person name="Han C."/>
            <person name="Kuske C.R."/>
            <person name="Schmutz J."/>
            <person name="Larimer F."/>
            <person name="Land M."/>
            <person name="Hauser L."/>
            <person name="Kyrpides N."/>
            <person name="Ivanova N."/>
            <person name="Marx C.J."/>
            <person name="Richardson P."/>
        </authorList>
    </citation>
    <scope>NUCLEOTIDE SEQUENCE [LARGE SCALE GENOMIC DNA]</scope>
    <source>
        <strain>4-46</strain>
    </source>
</reference>
<sequence>MIVGIGSDLCDIRRIERSLERFGERFTQRVFTPGERARSDRRAARAPSYARRFAAKEACAKALGTGLSQGVFWRDMEVVNLPSGAPTLRLTGGAAARLAALVPPGHRARLHVSLTDDPPLAQAFVVIEALRDESC</sequence>
<proteinExistence type="inferred from homology"/>
<name>ACPS_METS4</name>
<feature type="chain" id="PRO_1000093896" description="Holo-[acyl-carrier-protein] synthase">
    <location>
        <begin position="1"/>
        <end position="135"/>
    </location>
</feature>
<feature type="binding site" evidence="1">
    <location>
        <position position="8"/>
    </location>
    <ligand>
        <name>Mg(2+)</name>
        <dbReference type="ChEBI" id="CHEBI:18420"/>
    </ligand>
</feature>
<feature type="binding site" evidence="1">
    <location>
        <position position="57"/>
    </location>
    <ligand>
        <name>Mg(2+)</name>
        <dbReference type="ChEBI" id="CHEBI:18420"/>
    </ligand>
</feature>